<reference key="1">
    <citation type="journal article" date="2008" name="Appl. Environ. Microbiol.">
        <title>The genome of Polaromonas sp. strain JS666: insights into the evolution of a hydrocarbon- and xenobiotic-degrading bacterium, and features of relevance to biotechnology.</title>
        <authorList>
            <person name="Mattes T.E."/>
            <person name="Alexander A.K."/>
            <person name="Richardson P.M."/>
            <person name="Munk A.C."/>
            <person name="Han C.S."/>
            <person name="Stothard P."/>
            <person name="Coleman N.V."/>
        </authorList>
    </citation>
    <scope>NUCLEOTIDE SEQUENCE [LARGE SCALE GENOMIC DNA]</scope>
    <source>
        <strain>JS666 / ATCC BAA-500</strain>
    </source>
</reference>
<organism>
    <name type="scientific">Polaromonas sp. (strain JS666 / ATCC BAA-500)</name>
    <dbReference type="NCBI Taxonomy" id="296591"/>
    <lineage>
        <taxon>Bacteria</taxon>
        <taxon>Pseudomonadati</taxon>
        <taxon>Pseudomonadota</taxon>
        <taxon>Betaproteobacteria</taxon>
        <taxon>Burkholderiales</taxon>
        <taxon>Comamonadaceae</taxon>
        <taxon>Polaromonas</taxon>
    </lineage>
</organism>
<accession>Q12GX0</accession>
<gene>
    <name evidence="1" type="primary">rplD</name>
    <name type="ordered locus">Bpro_0257</name>
</gene>
<sequence>MQVELLNDQGLASSKVDVPDTVFGREYNESLIHQVVVAFQANARQGTRAQKDREQVRHSTKKPFKQKGTGRARAGMTSSPLWRGGGRIFPNMPDENFTQKINKKMYRAGMASIFSQLAREGRLAVVDSLAVDSPKTKVLADKFKAMNLNSVLVIADVVDENLYLASRNLVNILVVEPRYADPVSLVHYKKVLVTKAAMDQLKEMFA</sequence>
<evidence type="ECO:0000255" key="1">
    <source>
        <dbReference type="HAMAP-Rule" id="MF_01328"/>
    </source>
</evidence>
<evidence type="ECO:0000256" key="2">
    <source>
        <dbReference type="SAM" id="MobiDB-lite"/>
    </source>
</evidence>
<evidence type="ECO:0000305" key="3"/>
<proteinExistence type="inferred from homology"/>
<dbReference type="EMBL" id="CP000316">
    <property type="protein sequence ID" value="ABE42222.1"/>
    <property type="molecule type" value="Genomic_DNA"/>
</dbReference>
<dbReference type="RefSeq" id="WP_011481230.1">
    <property type="nucleotide sequence ID" value="NC_007948.1"/>
</dbReference>
<dbReference type="SMR" id="Q12GX0"/>
<dbReference type="STRING" id="296591.Bpro_0257"/>
<dbReference type="KEGG" id="pol:Bpro_0257"/>
<dbReference type="eggNOG" id="COG0088">
    <property type="taxonomic scope" value="Bacteria"/>
</dbReference>
<dbReference type="HOGENOM" id="CLU_041575_5_2_4"/>
<dbReference type="OrthoDB" id="9803201at2"/>
<dbReference type="Proteomes" id="UP000001983">
    <property type="component" value="Chromosome"/>
</dbReference>
<dbReference type="GO" id="GO:1990904">
    <property type="term" value="C:ribonucleoprotein complex"/>
    <property type="evidence" value="ECO:0007669"/>
    <property type="project" value="UniProtKB-KW"/>
</dbReference>
<dbReference type="GO" id="GO:0005840">
    <property type="term" value="C:ribosome"/>
    <property type="evidence" value="ECO:0007669"/>
    <property type="project" value="UniProtKB-KW"/>
</dbReference>
<dbReference type="GO" id="GO:0019843">
    <property type="term" value="F:rRNA binding"/>
    <property type="evidence" value="ECO:0007669"/>
    <property type="project" value="UniProtKB-UniRule"/>
</dbReference>
<dbReference type="GO" id="GO:0003735">
    <property type="term" value="F:structural constituent of ribosome"/>
    <property type="evidence" value="ECO:0007669"/>
    <property type="project" value="InterPro"/>
</dbReference>
<dbReference type="GO" id="GO:0006412">
    <property type="term" value="P:translation"/>
    <property type="evidence" value="ECO:0007669"/>
    <property type="project" value="UniProtKB-UniRule"/>
</dbReference>
<dbReference type="Gene3D" id="3.40.1370.10">
    <property type="match status" value="1"/>
</dbReference>
<dbReference type="HAMAP" id="MF_01328_B">
    <property type="entry name" value="Ribosomal_uL4_B"/>
    <property type="match status" value="1"/>
</dbReference>
<dbReference type="InterPro" id="IPR002136">
    <property type="entry name" value="Ribosomal_uL4"/>
</dbReference>
<dbReference type="InterPro" id="IPR013005">
    <property type="entry name" value="Ribosomal_uL4-like"/>
</dbReference>
<dbReference type="InterPro" id="IPR023574">
    <property type="entry name" value="Ribosomal_uL4_dom_sf"/>
</dbReference>
<dbReference type="NCBIfam" id="TIGR03953">
    <property type="entry name" value="rplD_bact"/>
    <property type="match status" value="1"/>
</dbReference>
<dbReference type="PANTHER" id="PTHR10746">
    <property type="entry name" value="50S RIBOSOMAL PROTEIN L4"/>
    <property type="match status" value="1"/>
</dbReference>
<dbReference type="PANTHER" id="PTHR10746:SF6">
    <property type="entry name" value="LARGE RIBOSOMAL SUBUNIT PROTEIN UL4M"/>
    <property type="match status" value="1"/>
</dbReference>
<dbReference type="Pfam" id="PF00573">
    <property type="entry name" value="Ribosomal_L4"/>
    <property type="match status" value="1"/>
</dbReference>
<dbReference type="SUPFAM" id="SSF52166">
    <property type="entry name" value="Ribosomal protein L4"/>
    <property type="match status" value="1"/>
</dbReference>
<protein>
    <recommendedName>
        <fullName evidence="1">Large ribosomal subunit protein uL4</fullName>
    </recommendedName>
    <alternativeName>
        <fullName evidence="3">50S ribosomal protein L4</fullName>
    </alternativeName>
</protein>
<comment type="function">
    <text evidence="1">One of the primary rRNA binding proteins, this protein initially binds near the 5'-end of the 23S rRNA. It is important during the early stages of 50S assembly. It makes multiple contacts with different domains of the 23S rRNA in the assembled 50S subunit and ribosome.</text>
</comment>
<comment type="function">
    <text evidence="1">Forms part of the polypeptide exit tunnel.</text>
</comment>
<comment type="subunit">
    <text evidence="1">Part of the 50S ribosomal subunit.</text>
</comment>
<comment type="similarity">
    <text evidence="1">Belongs to the universal ribosomal protein uL4 family.</text>
</comment>
<feature type="chain" id="PRO_1000052463" description="Large ribosomal subunit protein uL4">
    <location>
        <begin position="1"/>
        <end position="206"/>
    </location>
</feature>
<feature type="region of interest" description="Disordered" evidence="2">
    <location>
        <begin position="46"/>
        <end position="77"/>
    </location>
</feature>
<feature type="compositionally biased region" description="Basic residues" evidence="2">
    <location>
        <begin position="58"/>
        <end position="70"/>
    </location>
</feature>
<name>RL4_POLSJ</name>
<keyword id="KW-1185">Reference proteome</keyword>
<keyword id="KW-0687">Ribonucleoprotein</keyword>
<keyword id="KW-0689">Ribosomal protein</keyword>
<keyword id="KW-0694">RNA-binding</keyword>
<keyword id="KW-0699">rRNA-binding</keyword>